<reference key="1">
    <citation type="submission" date="2003-02" db="EMBL/GenBank/DDBJ databases">
        <authorList>
            <person name="Han W."/>
            <person name="Li T."/>
            <person name="Tan Y."/>
            <person name="Shi S."/>
            <person name="Ding P."/>
            <person name="Ma D."/>
        </authorList>
    </citation>
    <scope>NUCLEOTIDE SEQUENCE [MRNA]</scope>
    <source>
        <tissue>Testis</tissue>
    </source>
</reference>
<reference key="2">
    <citation type="journal article" date="2005" name="Science">
        <title>The transcriptional landscape of the mammalian genome.</title>
        <authorList>
            <person name="Carninci P."/>
            <person name="Kasukawa T."/>
            <person name="Katayama S."/>
            <person name="Gough J."/>
            <person name="Frith M.C."/>
            <person name="Maeda N."/>
            <person name="Oyama R."/>
            <person name="Ravasi T."/>
            <person name="Lenhard B."/>
            <person name="Wells C."/>
            <person name="Kodzius R."/>
            <person name="Shimokawa K."/>
            <person name="Bajic V.B."/>
            <person name="Brenner S.E."/>
            <person name="Batalov S."/>
            <person name="Forrest A.R."/>
            <person name="Zavolan M."/>
            <person name="Davis M.J."/>
            <person name="Wilming L.G."/>
            <person name="Aidinis V."/>
            <person name="Allen J.E."/>
            <person name="Ambesi-Impiombato A."/>
            <person name="Apweiler R."/>
            <person name="Aturaliya R.N."/>
            <person name="Bailey T.L."/>
            <person name="Bansal M."/>
            <person name="Baxter L."/>
            <person name="Beisel K.W."/>
            <person name="Bersano T."/>
            <person name="Bono H."/>
            <person name="Chalk A.M."/>
            <person name="Chiu K.P."/>
            <person name="Choudhary V."/>
            <person name="Christoffels A."/>
            <person name="Clutterbuck D.R."/>
            <person name="Crowe M.L."/>
            <person name="Dalla E."/>
            <person name="Dalrymple B.P."/>
            <person name="de Bono B."/>
            <person name="Della Gatta G."/>
            <person name="di Bernardo D."/>
            <person name="Down T."/>
            <person name="Engstrom P."/>
            <person name="Fagiolini M."/>
            <person name="Faulkner G."/>
            <person name="Fletcher C.F."/>
            <person name="Fukushima T."/>
            <person name="Furuno M."/>
            <person name="Futaki S."/>
            <person name="Gariboldi M."/>
            <person name="Georgii-Hemming P."/>
            <person name="Gingeras T.R."/>
            <person name="Gojobori T."/>
            <person name="Green R.E."/>
            <person name="Gustincich S."/>
            <person name="Harbers M."/>
            <person name="Hayashi Y."/>
            <person name="Hensch T.K."/>
            <person name="Hirokawa N."/>
            <person name="Hill D."/>
            <person name="Huminiecki L."/>
            <person name="Iacono M."/>
            <person name="Ikeo K."/>
            <person name="Iwama A."/>
            <person name="Ishikawa T."/>
            <person name="Jakt M."/>
            <person name="Kanapin A."/>
            <person name="Katoh M."/>
            <person name="Kawasawa Y."/>
            <person name="Kelso J."/>
            <person name="Kitamura H."/>
            <person name="Kitano H."/>
            <person name="Kollias G."/>
            <person name="Krishnan S.P."/>
            <person name="Kruger A."/>
            <person name="Kummerfeld S.K."/>
            <person name="Kurochkin I.V."/>
            <person name="Lareau L.F."/>
            <person name="Lazarevic D."/>
            <person name="Lipovich L."/>
            <person name="Liu J."/>
            <person name="Liuni S."/>
            <person name="McWilliam S."/>
            <person name="Madan Babu M."/>
            <person name="Madera M."/>
            <person name="Marchionni L."/>
            <person name="Matsuda H."/>
            <person name="Matsuzawa S."/>
            <person name="Miki H."/>
            <person name="Mignone F."/>
            <person name="Miyake S."/>
            <person name="Morris K."/>
            <person name="Mottagui-Tabar S."/>
            <person name="Mulder N."/>
            <person name="Nakano N."/>
            <person name="Nakauchi H."/>
            <person name="Ng P."/>
            <person name="Nilsson R."/>
            <person name="Nishiguchi S."/>
            <person name="Nishikawa S."/>
            <person name="Nori F."/>
            <person name="Ohara O."/>
            <person name="Okazaki Y."/>
            <person name="Orlando V."/>
            <person name="Pang K.C."/>
            <person name="Pavan W.J."/>
            <person name="Pavesi G."/>
            <person name="Pesole G."/>
            <person name="Petrovsky N."/>
            <person name="Piazza S."/>
            <person name="Reed J."/>
            <person name="Reid J.F."/>
            <person name="Ring B.Z."/>
            <person name="Ringwald M."/>
            <person name="Rost B."/>
            <person name="Ruan Y."/>
            <person name="Salzberg S.L."/>
            <person name="Sandelin A."/>
            <person name="Schneider C."/>
            <person name="Schoenbach C."/>
            <person name="Sekiguchi K."/>
            <person name="Semple C.A."/>
            <person name="Seno S."/>
            <person name="Sessa L."/>
            <person name="Sheng Y."/>
            <person name="Shibata Y."/>
            <person name="Shimada H."/>
            <person name="Shimada K."/>
            <person name="Silva D."/>
            <person name="Sinclair B."/>
            <person name="Sperling S."/>
            <person name="Stupka E."/>
            <person name="Sugiura K."/>
            <person name="Sultana R."/>
            <person name="Takenaka Y."/>
            <person name="Taki K."/>
            <person name="Tammoja K."/>
            <person name="Tan S.L."/>
            <person name="Tang S."/>
            <person name="Taylor M.S."/>
            <person name="Tegner J."/>
            <person name="Teichmann S.A."/>
            <person name="Ueda H.R."/>
            <person name="van Nimwegen E."/>
            <person name="Verardo R."/>
            <person name="Wei C.L."/>
            <person name="Yagi K."/>
            <person name="Yamanishi H."/>
            <person name="Zabarovsky E."/>
            <person name="Zhu S."/>
            <person name="Zimmer A."/>
            <person name="Hide W."/>
            <person name="Bult C."/>
            <person name="Grimmond S.M."/>
            <person name="Teasdale R.D."/>
            <person name="Liu E.T."/>
            <person name="Brusic V."/>
            <person name="Quackenbush J."/>
            <person name="Wahlestedt C."/>
            <person name="Mattick J.S."/>
            <person name="Hume D.A."/>
            <person name="Kai C."/>
            <person name="Sasaki D."/>
            <person name="Tomaru Y."/>
            <person name="Fukuda S."/>
            <person name="Kanamori-Katayama M."/>
            <person name="Suzuki M."/>
            <person name="Aoki J."/>
            <person name="Arakawa T."/>
            <person name="Iida J."/>
            <person name="Imamura K."/>
            <person name="Itoh M."/>
            <person name="Kato T."/>
            <person name="Kawaji H."/>
            <person name="Kawagashira N."/>
            <person name="Kawashima T."/>
            <person name="Kojima M."/>
            <person name="Kondo S."/>
            <person name="Konno H."/>
            <person name="Nakano K."/>
            <person name="Ninomiya N."/>
            <person name="Nishio T."/>
            <person name="Okada M."/>
            <person name="Plessy C."/>
            <person name="Shibata K."/>
            <person name="Shiraki T."/>
            <person name="Suzuki S."/>
            <person name="Tagami M."/>
            <person name="Waki K."/>
            <person name="Watahiki A."/>
            <person name="Okamura-Oho Y."/>
            <person name="Suzuki H."/>
            <person name="Kawai J."/>
            <person name="Hayashizaki Y."/>
        </authorList>
    </citation>
    <scope>NUCLEOTIDE SEQUENCE [LARGE SCALE MRNA]</scope>
    <source>
        <strain>C57BL/6J</strain>
        <tissue>Testis</tissue>
    </source>
</reference>
<reference key="3">
    <citation type="journal article" date="2004" name="Genome Res.">
        <title>The status, quality, and expansion of the NIH full-length cDNA project: the Mammalian Gene Collection (MGC).</title>
        <authorList>
            <consortium name="The MGC Project Team"/>
        </authorList>
    </citation>
    <scope>NUCLEOTIDE SEQUENCE [LARGE SCALE MRNA] (ISOFORM 4)</scope>
    <source>
        <tissue>Testis</tissue>
    </source>
</reference>
<proteinExistence type="evidence at transcript level"/>
<organism>
    <name type="scientific">Mus musculus</name>
    <name type="common">Mouse</name>
    <dbReference type="NCBI Taxonomy" id="10090"/>
    <lineage>
        <taxon>Eukaryota</taxon>
        <taxon>Metazoa</taxon>
        <taxon>Chordata</taxon>
        <taxon>Craniata</taxon>
        <taxon>Vertebrata</taxon>
        <taxon>Euteleostomi</taxon>
        <taxon>Mammalia</taxon>
        <taxon>Eutheria</taxon>
        <taxon>Euarchontoglires</taxon>
        <taxon>Glires</taxon>
        <taxon>Rodentia</taxon>
        <taxon>Myomorpha</taxon>
        <taxon>Muroidea</taxon>
        <taxon>Muridae</taxon>
        <taxon>Murinae</taxon>
        <taxon>Mus</taxon>
        <taxon>Mus</taxon>
    </lineage>
</organism>
<accession>Q9DAC0</accession>
<keyword id="KW-0025">Alternative splicing</keyword>
<keyword id="KW-0145">Chemotaxis</keyword>
<keyword id="KW-0202">Cytokine</keyword>
<keyword id="KW-0472">Membrane</keyword>
<keyword id="KW-1185">Reference proteome</keyword>
<keyword id="KW-0812">Transmembrane</keyword>
<keyword id="KW-1133">Transmembrane helix</keyword>
<name>CLF2B_MOUSE</name>
<feature type="chain" id="PRO_0000186100" description="CKLF-like MARVEL transmembrane domain-containing protein 2B">
    <location>
        <begin position="1"/>
        <end position="210"/>
    </location>
</feature>
<feature type="transmembrane region" description="Helical" evidence="1">
    <location>
        <begin position="35"/>
        <end position="55"/>
    </location>
</feature>
<feature type="transmembrane region" description="Helical" evidence="1">
    <location>
        <begin position="65"/>
        <end position="85"/>
    </location>
</feature>
<feature type="transmembrane region" description="Helical" evidence="1">
    <location>
        <begin position="103"/>
        <end position="123"/>
    </location>
</feature>
<feature type="transmembrane region" description="Helical" evidence="1">
    <location>
        <begin position="127"/>
        <end position="147"/>
    </location>
</feature>
<feature type="domain" description="MARVEL" evidence="2">
    <location>
        <begin position="35"/>
        <end position="157"/>
    </location>
</feature>
<comment type="subcellular location">
    <subcellularLocation>
        <location>Membrane</location>
        <topology>Multi-pass membrane protein</topology>
    </subcellularLocation>
</comment>
<comment type="alternative products">
    <event type="alternative splicing"/>
    <isoform>
        <id>Q9DAC0-1</id>
        <name>4</name>
        <sequence type="displayed"/>
    </isoform>
    <isoform>
        <id>Q9DAR1-1</id>
        <name>1</name>
        <name>1b</name>
        <sequence type="external"/>
    </isoform>
    <isoform>
        <id>Q9DAR1-2</id>
        <name>2</name>
        <sequence type="external"/>
    </isoform>
    <isoform>
        <id>Q9DAR1-3</id>
        <name>3</name>
        <name>1a</name>
        <sequence type="external"/>
    </isoform>
</comment>
<comment type="similarity">
    <text evidence="3">Belongs to the chemokine-like factor family.</text>
</comment>
<sequence length="210" mass="24366">MAAPAPRARTGGKKKDERRGFKGYKWEFRDSNKDFWAQGHAECKSLIMILLIAAMVCFQRVATHPIVILLLTMELSICAFFFFLYSLAINRYIPFVFWPMMDLMNDLACSTFLIGGIFFALEARRELPVPYLTGMILMGVTAFISIIDLCLQRRQFKSRKLRKFILLTPDRKGKKQDPKLLLMLAAKEDEEERQRELAEKAKRESMDPGW</sequence>
<evidence type="ECO:0000255" key="1"/>
<evidence type="ECO:0000255" key="2">
    <source>
        <dbReference type="PROSITE-ProRule" id="PRU00581"/>
    </source>
</evidence>
<evidence type="ECO:0000305" key="3"/>
<gene>
    <name type="primary">Cmtm2b</name>
    <name type="synonym">Cklfsf2b</name>
</gene>
<protein>
    <recommendedName>
        <fullName>CKLF-like MARVEL transmembrane domain-containing protein 2B</fullName>
    </recommendedName>
    <alternativeName>
        <fullName>Chemokine-like factor superfamily member 2B</fullName>
    </alternativeName>
</protein>
<dbReference type="EMBL" id="AY162282">
    <property type="protein sequence ID" value="AAO34103.1"/>
    <property type="molecule type" value="mRNA"/>
</dbReference>
<dbReference type="EMBL" id="AY241872">
    <property type="protein sequence ID" value="AAP33494.1"/>
    <property type="molecule type" value="mRNA"/>
</dbReference>
<dbReference type="EMBL" id="AK005970">
    <property type="protein sequence ID" value="BAB24346.1"/>
    <property type="molecule type" value="mRNA"/>
</dbReference>
<dbReference type="EMBL" id="BC060997">
    <property type="protein sequence ID" value="AAH60997.1"/>
    <property type="molecule type" value="mRNA"/>
</dbReference>
<dbReference type="CCDS" id="CCDS22576.1">
    <molecule id="Q9DAC0-1"/>
</dbReference>
<dbReference type="RefSeq" id="NP_082800.1">
    <molecule id="Q9DAC0-1"/>
    <property type="nucleotide sequence ID" value="NM_028524.3"/>
</dbReference>
<dbReference type="FunCoup" id="Q9DAC0">
    <property type="interactions" value="6"/>
</dbReference>
<dbReference type="STRING" id="10090.ENSMUSP00000043127"/>
<dbReference type="TCDB" id="1.A.64.5.7">
    <property type="family name" value="the plasmolipin (plasmolipin) family"/>
</dbReference>
<dbReference type="PhosphoSitePlus" id="Q9DAC0"/>
<dbReference type="SwissPalm" id="Q9DAC0"/>
<dbReference type="PaxDb" id="10090-ENSMUSP00000043127"/>
<dbReference type="ProteomicsDB" id="285492">
    <molecule id="Q9DAC0-1"/>
</dbReference>
<dbReference type="Ensembl" id="ENSMUST00000041973.7">
    <molecule id="Q9DAC0-1"/>
    <property type="protein sequence ID" value="ENSMUSP00000043127.6"/>
    <property type="gene ID" value="ENSMUSG00000035785.7"/>
</dbReference>
<dbReference type="GeneID" id="75502"/>
<dbReference type="KEGG" id="mmu:75502"/>
<dbReference type="UCSC" id="uc009nal.2">
    <molecule id="Q9DAC0-1"/>
    <property type="organism name" value="mouse"/>
</dbReference>
<dbReference type="AGR" id="MGI:2447311"/>
<dbReference type="CTD" id="75502"/>
<dbReference type="MGI" id="MGI:2447311">
    <property type="gene designation" value="Cmtm2b"/>
</dbReference>
<dbReference type="VEuPathDB" id="HostDB:ENSMUSG00000035785"/>
<dbReference type="eggNOG" id="KOG4788">
    <property type="taxonomic scope" value="Eukaryota"/>
</dbReference>
<dbReference type="GeneTree" id="ENSGT00390000005715"/>
<dbReference type="HOGENOM" id="CLU_106771_0_0_1"/>
<dbReference type="InParanoid" id="Q9DAC0"/>
<dbReference type="OMA" id="FAIHRYI"/>
<dbReference type="OrthoDB" id="9634153at2759"/>
<dbReference type="PhylomeDB" id="Q9DAC0"/>
<dbReference type="TreeFam" id="TF338711"/>
<dbReference type="BioGRID-ORCS" id="75502">
    <property type="hits" value="3 hits in 77 CRISPR screens"/>
</dbReference>
<dbReference type="ChiTaRS" id="Cmtm2b">
    <property type="organism name" value="mouse"/>
</dbReference>
<dbReference type="PRO" id="PR:Q9DAC0"/>
<dbReference type="Proteomes" id="UP000000589">
    <property type="component" value="Chromosome 8"/>
</dbReference>
<dbReference type="RNAct" id="Q9DAC0">
    <property type="molecule type" value="protein"/>
</dbReference>
<dbReference type="Bgee" id="ENSMUSG00000035785">
    <property type="expression patterns" value="Expressed in seminiferous tubule of testis and 13 other cell types or tissues"/>
</dbReference>
<dbReference type="ExpressionAtlas" id="Q9DAC0">
    <property type="expression patterns" value="baseline and differential"/>
</dbReference>
<dbReference type="GO" id="GO:0005615">
    <property type="term" value="C:extracellular space"/>
    <property type="evidence" value="ECO:0007669"/>
    <property type="project" value="UniProtKB-KW"/>
</dbReference>
<dbReference type="GO" id="GO:0016020">
    <property type="term" value="C:membrane"/>
    <property type="evidence" value="ECO:0007669"/>
    <property type="project" value="UniProtKB-SubCell"/>
</dbReference>
<dbReference type="GO" id="GO:0005125">
    <property type="term" value="F:cytokine activity"/>
    <property type="evidence" value="ECO:0007669"/>
    <property type="project" value="UniProtKB-KW"/>
</dbReference>
<dbReference type="GO" id="GO:0006935">
    <property type="term" value="P:chemotaxis"/>
    <property type="evidence" value="ECO:0007669"/>
    <property type="project" value="UniProtKB-KW"/>
</dbReference>
<dbReference type="InterPro" id="IPR008253">
    <property type="entry name" value="Marvel"/>
</dbReference>
<dbReference type="PROSITE" id="PS51225">
    <property type="entry name" value="MARVEL"/>
    <property type="match status" value="1"/>
</dbReference>